<evidence type="ECO:0000255" key="1">
    <source>
        <dbReference type="HAMAP-Rule" id="MF_00144"/>
    </source>
</evidence>
<keyword id="KW-0067">ATP-binding</keyword>
<keyword id="KW-0963">Cytoplasm</keyword>
<keyword id="KW-1015">Disulfide bond</keyword>
<keyword id="KW-0547">Nucleotide-binding</keyword>
<keyword id="KW-0694">RNA-binding</keyword>
<keyword id="KW-0808">Transferase</keyword>
<keyword id="KW-0819">tRNA processing</keyword>
<keyword id="KW-0820">tRNA-binding</keyword>
<comment type="function">
    <text evidence="1">Catalyzes the 2-thiolation of uridine at the wobble position (U34) of tRNA, leading to the formation of s(2)U34.</text>
</comment>
<comment type="catalytic activity">
    <reaction evidence="1">
        <text>S-sulfanyl-L-cysteinyl-[protein] + uridine(34) in tRNA + AH2 + ATP = 2-thiouridine(34) in tRNA + L-cysteinyl-[protein] + A + AMP + diphosphate + H(+)</text>
        <dbReference type="Rhea" id="RHEA:47032"/>
        <dbReference type="Rhea" id="RHEA-COMP:10131"/>
        <dbReference type="Rhea" id="RHEA-COMP:11726"/>
        <dbReference type="Rhea" id="RHEA-COMP:11727"/>
        <dbReference type="Rhea" id="RHEA-COMP:11728"/>
        <dbReference type="ChEBI" id="CHEBI:13193"/>
        <dbReference type="ChEBI" id="CHEBI:15378"/>
        <dbReference type="ChEBI" id="CHEBI:17499"/>
        <dbReference type="ChEBI" id="CHEBI:29950"/>
        <dbReference type="ChEBI" id="CHEBI:30616"/>
        <dbReference type="ChEBI" id="CHEBI:33019"/>
        <dbReference type="ChEBI" id="CHEBI:61963"/>
        <dbReference type="ChEBI" id="CHEBI:65315"/>
        <dbReference type="ChEBI" id="CHEBI:87170"/>
        <dbReference type="ChEBI" id="CHEBI:456215"/>
        <dbReference type="EC" id="2.8.1.13"/>
    </reaction>
</comment>
<comment type="subcellular location">
    <subcellularLocation>
        <location evidence="1">Cytoplasm</location>
    </subcellularLocation>
</comment>
<comment type="similarity">
    <text evidence="1">Belongs to the MnmA/TRMU family.</text>
</comment>
<organism>
    <name type="scientific">Staphylococcus aureus (strain COL)</name>
    <dbReference type="NCBI Taxonomy" id="93062"/>
    <lineage>
        <taxon>Bacteria</taxon>
        <taxon>Bacillati</taxon>
        <taxon>Bacillota</taxon>
        <taxon>Bacilli</taxon>
        <taxon>Bacillales</taxon>
        <taxon>Staphylococcaceae</taxon>
        <taxon>Staphylococcus</taxon>
    </lineage>
</organism>
<dbReference type="EC" id="2.8.1.13" evidence="1"/>
<dbReference type="EMBL" id="CP000046">
    <property type="protein sequence ID" value="AAW36783.1"/>
    <property type="molecule type" value="Genomic_DNA"/>
</dbReference>
<dbReference type="RefSeq" id="WP_000066097.1">
    <property type="nucleotide sequence ID" value="NZ_JBGOFO010000003.1"/>
</dbReference>
<dbReference type="SMR" id="Q5HFE1"/>
<dbReference type="KEGG" id="sac:SACOL1676"/>
<dbReference type="HOGENOM" id="CLU_035188_1_0_9"/>
<dbReference type="Proteomes" id="UP000000530">
    <property type="component" value="Chromosome"/>
</dbReference>
<dbReference type="GO" id="GO:0005737">
    <property type="term" value="C:cytoplasm"/>
    <property type="evidence" value="ECO:0007669"/>
    <property type="project" value="UniProtKB-SubCell"/>
</dbReference>
<dbReference type="GO" id="GO:0005524">
    <property type="term" value="F:ATP binding"/>
    <property type="evidence" value="ECO:0007669"/>
    <property type="project" value="UniProtKB-KW"/>
</dbReference>
<dbReference type="GO" id="GO:0000049">
    <property type="term" value="F:tRNA binding"/>
    <property type="evidence" value="ECO:0007669"/>
    <property type="project" value="UniProtKB-KW"/>
</dbReference>
<dbReference type="GO" id="GO:0103016">
    <property type="term" value="F:tRNA-uridine 2-sulfurtransferase activity"/>
    <property type="evidence" value="ECO:0007669"/>
    <property type="project" value="UniProtKB-EC"/>
</dbReference>
<dbReference type="GO" id="GO:0002143">
    <property type="term" value="P:tRNA wobble position uridine thiolation"/>
    <property type="evidence" value="ECO:0007669"/>
    <property type="project" value="TreeGrafter"/>
</dbReference>
<dbReference type="CDD" id="cd01998">
    <property type="entry name" value="MnmA_TRMU-like"/>
    <property type="match status" value="1"/>
</dbReference>
<dbReference type="FunFam" id="2.30.30.280:FF:000001">
    <property type="entry name" value="tRNA-specific 2-thiouridylase MnmA"/>
    <property type="match status" value="1"/>
</dbReference>
<dbReference type="FunFam" id="2.40.30.10:FF:000023">
    <property type="entry name" value="tRNA-specific 2-thiouridylase MnmA"/>
    <property type="match status" value="1"/>
</dbReference>
<dbReference type="FunFam" id="3.40.50.620:FF:000004">
    <property type="entry name" value="tRNA-specific 2-thiouridylase MnmA"/>
    <property type="match status" value="1"/>
</dbReference>
<dbReference type="Gene3D" id="2.30.30.280">
    <property type="entry name" value="Adenine nucleotide alpha hydrolases-like domains"/>
    <property type="match status" value="1"/>
</dbReference>
<dbReference type="Gene3D" id="3.40.50.620">
    <property type="entry name" value="HUPs"/>
    <property type="match status" value="1"/>
</dbReference>
<dbReference type="Gene3D" id="2.40.30.10">
    <property type="entry name" value="Translation factors"/>
    <property type="match status" value="1"/>
</dbReference>
<dbReference type="HAMAP" id="MF_00144">
    <property type="entry name" value="tRNA_thiouridyl_MnmA"/>
    <property type="match status" value="1"/>
</dbReference>
<dbReference type="InterPro" id="IPR004506">
    <property type="entry name" value="MnmA-like"/>
</dbReference>
<dbReference type="InterPro" id="IPR046885">
    <property type="entry name" value="MnmA-like_C"/>
</dbReference>
<dbReference type="InterPro" id="IPR046884">
    <property type="entry name" value="MnmA-like_central"/>
</dbReference>
<dbReference type="InterPro" id="IPR023382">
    <property type="entry name" value="MnmA-like_central_sf"/>
</dbReference>
<dbReference type="InterPro" id="IPR014729">
    <property type="entry name" value="Rossmann-like_a/b/a_fold"/>
</dbReference>
<dbReference type="NCBIfam" id="NF001138">
    <property type="entry name" value="PRK00143.1"/>
    <property type="match status" value="1"/>
</dbReference>
<dbReference type="NCBIfam" id="TIGR00420">
    <property type="entry name" value="trmU"/>
    <property type="match status" value="1"/>
</dbReference>
<dbReference type="PANTHER" id="PTHR11933:SF5">
    <property type="entry name" value="MITOCHONDRIAL TRNA-SPECIFIC 2-THIOURIDYLASE 1"/>
    <property type="match status" value="1"/>
</dbReference>
<dbReference type="PANTHER" id="PTHR11933">
    <property type="entry name" value="TRNA 5-METHYLAMINOMETHYL-2-THIOURIDYLATE -METHYLTRANSFERASE"/>
    <property type="match status" value="1"/>
</dbReference>
<dbReference type="Pfam" id="PF03054">
    <property type="entry name" value="tRNA_Me_trans"/>
    <property type="match status" value="1"/>
</dbReference>
<dbReference type="Pfam" id="PF20258">
    <property type="entry name" value="tRNA_Me_trans_C"/>
    <property type="match status" value="1"/>
</dbReference>
<dbReference type="Pfam" id="PF20259">
    <property type="entry name" value="tRNA_Me_trans_M"/>
    <property type="match status" value="1"/>
</dbReference>
<dbReference type="SUPFAM" id="SSF52402">
    <property type="entry name" value="Adenine nucleotide alpha hydrolases-like"/>
    <property type="match status" value="1"/>
</dbReference>
<sequence length="372" mass="42150">MSNKDIRVVVGMSGGVDSSVTAHVLKEQGYDVIGIFMKNWDDTDENGVCTATEDYNDVIEVCNQIGIPYYAVNFEKEYWDKVFTYFLDEYKKGRTPNPDVMCNKEIKFKAFLDHAMNLGADYVATGHYARIHRHEDGHVEMLRGVDNNKDQTYFLNQLSQQQLSKVMFPIGDIEKSEVRRIAEEQGLVTAKKKDSTGICFIGEKNFKTFLSQYLPAQPGDMITLDGKKMGKHSGLMYYTIGQRHGLGIGGDGDPWFVVGKNLKDNVLYVEQGFHHDALYSDYLIASDYSFVNPEDNDLDQGFECTAKFRYRQKDTKVFVKRENDHALRVTFAEPVRAITPGQAVVFYQGDVCLGGATIDDVFKNEGQLNYVV</sequence>
<feature type="chain" id="PRO_0000121673" description="tRNA-specific 2-thiouridylase MnmA">
    <location>
        <begin position="1"/>
        <end position="372"/>
    </location>
</feature>
<feature type="region of interest" description="Interaction with target base in tRNA" evidence="1">
    <location>
        <begin position="97"/>
        <end position="99"/>
    </location>
</feature>
<feature type="region of interest" description="Interaction with tRNA" evidence="1">
    <location>
        <begin position="149"/>
        <end position="151"/>
    </location>
</feature>
<feature type="region of interest" description="Interaction with tRNA" evidence="1">
    <location>
        <begin position="309"/>
        <end position="310"/>
    </location>
</feature>
<feature type="active site" description="Nucleophile" evidence="1">
    <location>
        <position position="102"/>
    </location>
</feature>
<feature type="active site" description="Cysteine persulfide intermediate" evidence="1">
    <location>
        <position position="199"/>
    </location>
</feature>
<feature type="binding site" evidence="1">
    <location>
        <begin position="11"/>
        <end position="18"/>
    </location>
    <ligand>
        <name>ATP</name>
        <dbReference type="ChEBI" id="CHEBI:30616"/>
    </ligand>
</feature>
<feature type="binding site" evidence="1">
    <location>
        <position position="37"/>
    </location>
    <ligand>
        <name>ATP</name>
        <dbReference type="ChEBI" id="CHEBI:30616"/>
    </ligand>
</feature>
<feature type="binding site" evidence="1">
    <location>
        <position position="126"/>
    </location>
    <ligand>
        <name>ATP</name>
        <dbReference type="ChEBI" id="CHEBI:30616"/>
    </ligand>
</feature>
<feature type="site" description="Interaction with tRNA" evidence="1">
    <location>
        <position position="127"/>
    </location>
</feature>
<feature type="site" description="Interaction with tRNA" evidence="1">
    <location>
        <position position="342"/>
    </location>
</feature>
<feature type="disulfide bond" description="Alternate" evidence="1">
    <location>
        <begin position="102"/>
        <end position="199"/>
    </location>
</feature>
<accession>Q5HFE1</accession>
<reference key="1">
    <citation type="journal article" date="2005" name="J. Bacteriol.">
        <title>Insights on evolution of virulence and resistance from the complete genome analysis of an early methicillin-resistant Staphylococcus aureus strain and a biofilm-producing methicillin-resistant Staphylococcus epidermidis strain.</title>
        <authorList>
            <person name="Gill S.R."/>
            <person name="Fouts D.E."/>
            <person name="Archer G.L."/>
            <person name="Mongodin E.F."/>
            <person name="DeBoy R.T."/>
            <person name="Ravel J."/>
            <person name="Paulsen I.T."/>
            <person name="Kolonay J.F."/>
            <person name="Brinkac L.M."/>
            <person name="Beanan M.J."/>
            <person name="Dodson R.J."/>
            <person name="Daugherty S.C."/>
            <person name="Madupu R."/>
            <person name="Angiuoli S.V."/>
            <person name="Durkin A.S."/>
            <person name="Haft D.H."/>
            <person name="Vamathevan J.J."/>
            <person name="Khouri H."/>
            <person name="Utterback T.R."/>
            <person name="Lee C."/>
            <person name="Dimitrov G."/>
            <person name="Jiang L."/>
            <person name="Qin H."/>
            <person name="Weidman J."/>
            <person name="Tran K."/>
            <person name="Kang K.H."/>
            <person name="Hance I.R."/>
            <person name="Nelson K.E."/>
            <person name="Fraser C.M."/>
        </authorList>
    </citation>
    <scope>NUCLEOTIDE SEQUENCE [LARGE SCALE GENOMIC DNA]</scope>
    <source>
        <strain>COL</strain>
    </source>
</reference>
<proteinExistence type="inferred from homology"/>
<name>MNMA_STAAC</name>
<protein>
    <recommendedName>
        <fullName evidence="1">tRNA-specific 2-thiouridylase MnmA</fullName>
        <ecNumber evidence="1">2.8.1.13</ecNumber>
    </recommendedName>
</protein>
<gene>
    <name evidence="1" type="primary">mnmA</name>
    <name type="synonym">trmU</name>
    <name type="ordered locus">SACOL1676</name>
</gene>